<comment type="function">
    <text evidence="3">Catalyzes the hydroxylation of L-phenylalanine to L-tyrosine (PubMed:20959559). Does not seem to be tetrahydropterin-dependent and shows preference for 10-formyltetrahydrofolate as cosubstrate and electron donor (PubMed:20959559).</text>
</comment>
<comment type="catalytic activity">
    <reaction evidence="3">
        <text>(6R)-L-erythro-5,6,7,8-tetrahydrobiopterin + L-phenylalanine + O2 = (4aS,6R)-4a-hydroxy-L-erythro-5,6,7,8-tetrahydrobiopterin + L-tyrosine</text>
        <dbReference type="Rhea" id="RHEA:20273"/>
        <dbReference type="ChEBI" id="CHEBI:15379"/>
        <dbReference type="ChEBI" id="CHEBI:15642"/>
        <dbReference type="ChEBI" id="CHEBI:58095"/>
        <dbReference type="ChEBI" id="CHEBI:58315"/>
        <dbReference type="ChEBI" id="CHEBI:59560"/>
        <dbReference type="EC" id="1.14.16.1"/>
    </reaction>
    <physiologicalReaction direction="left-to-right" evidence="3">
        <dbReference type="Rhea" id="RHEA:20274"/>
    </physiologicalReaction>
</comment>
<comment type="cofactor">
    <cofactor evidence="3">
        <name>Fe(2+)</name>
        <dbReference type="ChEBI" id="CHEBI:29033"/>
    </cofactor>
</comment>
<comment type="biophysicochemical properties">
    <kinetics>
        <KM evidence="3">281 uM for L-phenylalanine with (6R)-L-erythro-5,6,7,8-tetrahydrobiopterin as cosubstrate</KM>
        <KM evidence="3">293 uM for L-phenylalanine with 10-formyltetrahydrofolate as cosubstrate</KM>
        <text evidence="3">kcat is 0.132 sec(-1) with L-phenylalanine as substrate and (6R)-L-erythro-5,6,7,8-tetrahydrobiopterin as cosubstrate (PubMed:20959559). kcat is 2.30 sec(-1) with L-phenylalanine as substrate and 10-formyltetrahydrofolate as cosubstrate (PubMed:20959559).</text>
    </kinetics>
</comment>
<comment type="subunit">
    <text evidence="3">Forms monomers.</text>
</comment>
<comment type="subcellular location">
    <subcellularLocation>
        <location evidence="3">Plastid</location>
        <location evidence="3">Chloroplast</location>
    </subcellularLocation>
</comment>
<comment type="similarity">
    <text evidence="5">Belongs to the biopterin-dependent aromatic amino acid hydroxylase family.</text>
</comment>
<proteinExistence type="evidence at protein level"/>
<accession>E5KBU3</accession>
<feature type="transit peptide" description="Chloroplast" evidence="2">
    <location>
        <begin position="1"/>
        <end position="60"/>
    </location>
</feature>
<feature type="chain" id="PRO_0000457286" description="Phenylalanine 4-monooxygenase, chloroplastic" evidence="2">
    <location>
        <begin position="61"/>
        <end position="354"/>
    </location>
</feature>
<feature type="binding site" evidence="1">
    <location>
        <position position="229"/>
    </location>
    <ligand>
        <name>Fe cation</name>
        <dbReference type="ChEBI" id="CHEBI:24875"/>
    </ligand>
</feature>
<feature type="binding site" evidence="1">
    <location>
        <position position="234"/>
    </location>
    <ligand>
        <name>Fe cation</name>
        <dbReference type="ChEBI" id="CHEBI:24875"/>
    </ligand>
</feature>
<feature type="binding site" evidence="1">
    <location>
        <position position="274"/>
    </location>
    <ligand>
        <name>Fe cation</name>
        <dbReference type="ChEBI" id="CHEBI:24875"/>
    </ligand>
</feature>
<dbReference type="EC" id="1.14.16.1" evidence="3"/>
<dbReference type="EMBL" id="HQ003814">
    <property type="protein sequence ID" value="ADR30399.1"/>
    <property type="molecule type" value="mRNA"/>
</dbReference>
<dbReference type="SMR" id="E5KBU3"/>
<dbReference type="GO" id="GO:0009507">
    <property type="term" value="C:chloroplast"/>
    <property type="evidence" value="ECO:0007669"/>
    <property type="project" value="UniProtKB-SubCell"/>
</dbReference>
<dbReference type="GO" id="GO:0005506">
    <property type="term" value="F:iron ion binding"/>
    <property type="evidence" value="ECO:0007669"/>
    <property type="project" value="InterPro"/>
</dbReference>
<dbReference type="GO" id="GO:0004505">
    <property type="term" value="F:phenylalanine 4-monooxygenase activity"/>
    <property type="evidence" value="ECO:0007669"/>
    <property type="project" value="UniProtKB-EC"/>
</dbReference>
<dbReference type="GO" id="GO:0006559">
    <property type="term" value="P:L-phenylalanine catabolic process"/>
    <property type="evidence" value="ECO:0007669"/>
    <property type="project" value="UniProtKB-KW"/>
</dbReference>
<dbReference type="Gene3D" id="1.10.800.10">
    <property type="entry name" value="Aromatic amino acid hydroxylase"/>
    <property type="match status" value="1"/>
</dbReference>
<dbReference type="InterPro" id="IPR001273">
    <property type="entry name" value="ArAA_hydroxylase"/>
</dbReference>
<dbReference type="InterPro" id="IPR018301">
    <property type="entry name" value="ArAA_hydroxylase_Fe/CU_BS"/>
</dbReference>
<dbReference type="InterPro" id="IPR036951">
    <property type="entry name" value="ArAA_hydroxylase_sf"/>
</dbReference>
<dbReference type="InterPro" id="IPR036329">
    <property type="entry name" value="Aro-AA_hydroxylase_C_sf"/>
</dbReference>
<dbReference type="InterPro" id="IPR019774">
    <property type="entry name" value="Aromatic-AA_hydroxylase_C"/>
</dbReference>
<dbReference type="PANTHER" id="PTHR11473">
    <property type="entry name" value="AROMATIC AMINO ACID HYDROXYLASE"/>
    <property type="match status" value="1"/>
</dbReference>
<dbReference type="PANTHER" id="PTHR11473:SF24">
    <property type="entry name" value="PHENYLALANINE-4-HYDROXYLASE"/>
    <property type="match status" value="1"/>
</dbReference>
<dbReference type="Pfam" id="PF00351">
    <property type="entry name" value="Biopterin_H"/>
    <property type="match status" value="1"/>
</dbReference>
<dbReference type="PRINTS" id="PR00372">
    <property type="entry name" value="FYWHYDRXLASE"/>
</dbReference>
<dbReference type="SUPFAM" id="SSF56534">
    <property type="entry name" value="Aromatic aminoacid monoxygenases, catalytic and oligomerization domains"/>
    <property type="match status" value="1"/>
</dbReference>
<dbReference type="PROSITE" id="PS00367">
    <property type="entry name" value="BH4_AAA_HYDROXYL_1"/>
    <property type="match status" value="1"/>
</dbReference>
<dbReference type="PROSITE" id="PS51410">
    <property type="entry name" value="BH4_AAA_HYDROXYL_2"/>
    <property type="match status" value="1"/>
</dbReference>
<protein>
    <recommendedName>
        <fullName evidence="5">Phenylalanine 4-monooxygenase, chloroplastic</fullName>
        <ecNumber evidence="3">1.14.16.1</ecNumber>
    </recommendedName>
    <alternativeName>
        <fullName evidence="4">Aromatic amino acid hydroxylase</fullName>
    </alternativeName>
    <alternativeName>
        <fullName evidence="4">Phenylalanine 4-hydroxylase</fullName>
    </alternativeName>
</protein>
<name>PH4H_PINTA</name>
<keyword id="KW-0021">Allosteric enzyme</keyword>
<keyword id="KW-0150">Chloroplast</keyword>
<keyword id="KW-0408">Iron</keyword>
<keyword id="KW-0479">Metal-binding</keyword>
<keyword id="KW-0503">Monooxygenase</keyword>
<keyword id="KW-0560">Oxidoreductase</keyword>
<keyword id="KW-0585">Phenylalanine catabolism</keyword>
<keyword id="KW-0934">Plastid</keyword>
<keyword id="KW-0809">Transit peptide</keyword>
<sequence>MAFPLQKTFLCSNGQSFPCSNGRSTSTLLASDLKFQRLNKPFILRVGSMQIRNSPKEHPRVSSAAVLPPVPRSIHDIPNGDHILGFGANLAEDHPGYHDEEYKRRRSCIADLAKKHKIGEPIPEINYTTEEAHVWAEVLTKLSELYPSHACKEYLESFPLFNFSPNKIPQLEELSQILQHYTGWKIRPVAGLLHPRQFLNGLAFKTFHSTQYIRHTSNPMYTPEPDICHEILGHMPMLVHPEFADLAQVIGLASLGASDKEIWHLTKLYWYTVEFGTIEENKEVKAFGAGILSSFGELQHMKSSKPTFQKLDPFAQLPKMSYKDGFQNMYFLCQSFSDTTEKLRSYARTIHSGN</sequence>
<organism>
    <name type="scientific">Pinus taeda</name>
    <name type="common">Loblolly pine</name>
    <dbReference type="NCBI Taxonomy" id="3352"/>
    <lineage>
        <taxon>Eukaryota</taxon>
        <taxon>Viridiplantae</taxon>
        <taxon>Streptophyta</taxon>
        <taxon>Embryophyta</taxon>
        <taxon>Tracheophyta</taxon>
        <taxon>Spermatophyta</taxon>
        <taxon>Pinopsida</taxon>
        <taxon>Pinidae</taxon>
        <taxon>Conifers I</taxon>
        <taxon>Pinales</taxon>
        <taxon>Pinaceae</taxon>
        <taxon>Pinus</taxon>
        <taxon>Pinus subgen. Pinus</taxon>
    </lineage>
</organism>
<evidence type="ECO:0000250" key="1">
    <source>
        <dbReference type="UniProtKB" id="P04176"/>
    </source>
</evidence>
<evidence type="ECO:0000255" key="2"/>
<evidence type="ECO:0000269" key="3">
    <source>
    </source>
</evidence>
<evidence type="ECO:0000303" key="4">
    <source>
    </source>
</evidence>
<evidence type="ECO:0000305" key="5"/>
<reference key="1">
    <citation type="journal article" date="2010" name="Plant Cell">
        <title>Nonflowering plants possess a unique folate-dependent phenylalanine hydroxylase that is localized in chloroplasts.</title>
        <authorList>
            <person name="Pribat A."/>
            <person name="Noiriel A."/>
            <person name="Morse A.M."/>
            <person name="Davis J.M."/>
            <person name="Fouquet R."/>
            <person name="Loizeau K."/>
            <person name="Ravanel S."/>
            <person name="Frank W."/>
            <person name="Haas R."/>
            <person name="Reski R."/>
            <person name="Bedair M."/>
            <person name="Sumner L.W."/>
            <person name="Hanson A.D."/>
        </authorList>
    </citation>
    <scope>NUCLEOTIDE SEQUENCE [MRNA]</scope>
    <scope>FUNCTION</scope>
    <scope>CATALYTIC ACTIVITY</scope>
    <scope>COFACTOR</scope>
    <scope>BIOPHYSICOCHEMICAL PROPERTIES</scope>
    <scope>SUBUNIT</scope>
    <scope>SUBCELLULAR LOCATION</scope>
</reference>